<comment type="function">
    <text evidence="1">Binds as a heterodimer with protein bS6 to the central domain of the 16S rRNA, where it helps stabilize the platform of the 30S subunit.</text>
</comment>
<comment type="subunit">
    <text evidence="1">Part of the 30S ribosomal subunit. Forms a tight heterodimer with protein bS6.</text>
</comment>
<comment type="similarity">
    <text evidence="1">Belongs to the bacterial ribosomal protein bS18 family.</text>
</comment>
<name>RS18_BRASO</name>
<keyword id="KW-1185">Reference proteome</keyword>
<keyword id="KW-0687">Ribonucleoprotein</keyword>
<keyword id="KW-0689">Ribosomal protein</keyword>
<keyword id="KW-0694">RNA-binding</keyword>
<keyword id="KW-0699">rRNA-binding</keyword>
<accession>A4YT76</accession>
<dbReference type="EMBL" id="CU234118">
    <property type="protein sequence ID" value="CAL77102.1"/>
    <property type="molecule type" value="Genomic_DNA"/>
</dbReference>
<dbReference type="RefSeq" id="WP_008963441.1">
    <property type="nucleotide sequence ID" value="NC_009445.1"/>
</dbReference>
<dbReference type="SMR" id="A4YT76"/>
<dbReference type="STRING" id="114615.BRADO3308"/>
<dbReference type="KEGG" id="bra:BRADO3308"/>
<dbReference type="eggNOG" id="COG0238">
    <property type="taxonomic scope" value="Bacteria"/>
</dbReference>
<dbReference type="HOGENOM" id="CLU_148710_2_3_5"/>
<dbReference type="OrthoDB" id="9812008at2"/>
<dbReference type="Proteomes" id="UP000001994">
    <property type="component" value="Chromosome"/>
</dbReference>
<dbReference type="GO" id="GO:0022627">
    <property type="term" value="C:cytosolic small ribosomal subunit"/>
    <property type="evidence" value="ECO:0007669"/>
    <property type="project" value="TreeGrafter"/>
</dbReference>
<dbReference type="GO" id="GO:0070181">
    <property type="term" value="F:small ribosomal subunit rRNA binding"/>
    <property type="evidence" value="ECO:0007669"/>
    <property type="project" value="TreeGrafter"/>
</dbReference>
<dbReference type="GO" id="GO:0003735">
    <property type="term" value="F:structural constituent of ribosome"/>
    <property type="evidence" value="ECO:0007669"/>
    <property type="project" value="InterPro"/>
</dbReference>
<dbReference type="GO" id="GO:0006412">
    <property type="term" value="P:translation"/>
    <property type="evidence" value="ECO:0007669"/>
    <property type="project" value="UniProtKB-UniRule"/>
</dbReference>
<dbReference type="FunFam" id="4.10.640.10:FF:000006">
    <property type="entry name" value="30S ribosomal protein S18"/>
    <property type="match status" value="1"/>
</dbReference>
<dbReference type="Gene3D" id="4.10.640.10">
    <property type="entry name" value="Ribosomal protein S18"/>
    <property type="match status" value="1"/>
</dbReference>
<dbReference type="HAMAP" id="MF_00270">
    <property type="entry name" value="Ribosomal_bS18"/>
    <property type="match status" value="1"/>
</dbReference>
<dbReference type="InterPro" id="IPR001648">
    <property type="entry name" value="Ribosomal_bS18"/>
</dbReference>
<dbReference type="InterPro" id="IPR018275">
    <property type="entry name" value="Ribosomal_bS18_CS"/>
</dbReference>
<dbReference type="InterPro" id="IPR036870">
    <property type="entry name" value="Ribosomal_bS18_sf"/>
</dbReference>
<dbReference type="NCBIfam" id="TIGR00165">
    <property type="entry name" value="S18"/>
    <property type="match status" value="1"/>
</dbReference>
<dbReference type="PANTHER" id="PTHR13479">
    <property type="entry name" value="30S RIBOSOMAL PROTEIN S18"/>
    <property type="match status" value="1"/>
</dbReference>
<dbReference type="PANTHER" id="PTHR13479:SF40">
    <property type="entry name" value="SMALL RIBOSOMAL SUBUNIT PROTEIN BS18M"/>
    <property type="match status" value="1"/>
</dbReference>
<dbReference type="Pfam" id="PF01084">
    <property type="entry name" value="Ribosomal_S18"/>
    <property type="match status" value="1"/>
</dbReference>
<dbReference type="PRINTS" id="PR00974">
    <property type="entry name" value="RIBOSOMALS18"/>
</dbReference>
<dbReference type="SUPFAM" id="SSF46911">
    <property type="entry name" value="Ribosomal protein S18"/>
    <property type="match status" value="1"/>
</dbReference>
<dbReference type="PROSITE" id="PS00057">
    <property type="entry name" value="RIBOSOMAL_S18"/>
    <property type="match status" value="1"/>
</dbReference>
<protein>
    <recommendedName>
        <fullName evidence="1">Small ribosomal subunit protein bS18</fullName>
    </recommendedName>
    <alternativeName>
        <fullName evidence="2">30S ribosomal protein S18</fullName>
    </alternativeName>
</protein>
<evidence type="ECO:0000255" key="1">
    <source>
        <dbReference type="HAMAP-Rule" id="MF_00270"/>
    </source>
</evidence>
<evidence type="ECO:0000305" key="2"/>
<feature type="chain" id="PRO_1000003452" description="Small ribosomal subunit protein bS18">
    <location>
        <begin position="1"/>
        <end position="79"/>
    </location>
</feature>
<gene>
    <name evidence="1" type="primary">rpsR</name>
    <name type="ordered locus">BRADO3308</name>
</gene>
<sequence>MAEAPARRPFFRRRKTCPFSGPNAPKIDYKDSKLLMRYVSERGKIVPSRITAVSAKKQRELARAIKRARFLGLLPYVIR</sequence>
<proteinExistence type="inferred from homology"/>
<organism>
    <name type="scientific">Bradyrhizobium sp. (strain ORS 278)</name>
    <dbReference type="NCBI Taxonomy" id="114615"/>
    <lineage>
        <taxon>Bacteria</taxon>
        <taxon>Pseudomonadati</taxon>
        <taxon>Pseudomonadota</taxon>
        <taxon>Alphaproteobacteria</taxon>
        <taxon>Hyphomicrobiales</taxon>
        <taxon>Nitrobacteraceae</taxon>
        <taxon>Bradyrhizobium</taxon>
    </lineage>
</organism>
<reference key="1">
    <citation type="journal article" date="2007" name="Science">
        <title>Legumes symbioses: absence of nod genes in photosynthetic bradyrhizobia.</title>
        <authorList>
            <person name="Giraud E."/>
            <person name="Moulin L."/>
            <person name="Vallenet D."/>
            <person name="Barbe V."/>
            <person name="Cytryn E."/>
            <person name="Avarre J.-C."/>
            <person name="Jaubert M."/>
            <person name="Simon D."/>
            <person name="Cartieaux F."/>
            <person name="Prin Y."/>
            <person name="Bena G."/>
            <person name="Hannibal L."/>
            <person name="Fardoux J."/>
            <person name="Kojadinovic M."/>
            <person name="Vuillet L."/>
            <person name="Lajus A."/>
            <person name="Cruveiller S."/>
            <person name="Rouy Z."/>
            <person name="Mangenot S."/>
            <person name="Segurens B."/>
            <person name="Dossat C."/>
            <person name="Franck W.L."/>
            <person name="Chang W.-S."/>
            <person name="Saunders E."/>
            <person name="Bruce D."/>
            <person name="Richardson P."/>
            <person name="Normand P."/>
            <person name="Dreyfus B."/>
            <person name="Pignol D."/>
            <person name="Stacey G."/>
            <person name="Emerich D."/>
            <person name="Vermeglio A."/>
            <person name="Medigue C."/>
            <person name="Sadowsky M."/>
        </authorList>
    </citation>
    <scope>NUCLEOTIDE SEQUENCE [LARGE SCALE GENOMIC DNA]</scope>
    <source>
        <strain>ORS 278</strain>
    </source>
</reference>